<comment type="similarity">
    <text evidence="1">Belongs to the bacterial ribosomal protein bL35 family.</text>
</comment>
<name>RL35_PECAS</name>
<dbReference type="EMBL" id="BX950851">
    <property type="protein sequence ID" value="CAG75323.1"/>
    <property type="molecule type" value="Genomic_DNA"/>
</dbReference>
<dbReference type="RefSeq" id="WP_005968897.1">
    <property type="nucleotide sequence ID" value="NC_004547.2"/>
</dbReference>
<dbReference type="SMR" id="Q6D4H0"/>
<dbReference type="STRING" id="218491.ECA2420"/>
<dbReference type="GeneID" id="93421026"/>
<dbReference type="KEGG" id="eca:ECA2420"/>
<dbReference type="eggNOG" id="COG0291">
    <property type="taxonomic scope" value="Bacteria"/>
</dbReference>
<dbReference type="HOGENOM" id="CLU_169643_1_1_6"/>
<dbReference type="OrthoDB" id="47476at2"/>
<dbReference type="Proteomes" id="UP000007966">
    <property type="component" value="Chromosome"/>
</dbReference>
<dbReference type="GO" id="GO:0022625">
    <property type="term" value="C:cytosolic large ribosomal subunit"/>
    <property type="evidence" value="ECO:0007669"/>
    <property type="project" value="TreeGrafter"/>
</dbReference>
<dbReference type="GO" id="GO:0003735">
    <property type="term" value="F:structural constituent of ribosome"/>
    <property type="evidence" value="ECO:0007669"/>
    <property type="project" value="InterPro"/>
</dbReference>
<dbReference type="GO" id="GO:0006412">
    <property type="term" value="P:translation"/>
    <property type="evidence" value="ECO:0007669"/>
    <property type="project" value="UniProtKB-UniRule"/>
</dbReference>
<dbReference type="FunFam" id="4.10.410.60:FF:000001">
    <property type="entry name" value="50S ribosomal protein L35"/>
    <property type="match status" value="1"/>
</dbReference>
<dbReference type="Gene3D" id="4.10.410.60">
    <property type="match status" value="1"/>
</dbReference>
<dbReference type="HAMAP" id="MF_00514">
    <property type="entry name" value="Ribosomal_bL35"/>
    <property type="match status" value="1"/>
</dbReference>
<dbReference type="InterPro" id="IPR001706">
    <property type="entry name" value="Ribosomal_bL35"/>
</dbReference>
<dbReference type="InterPro" id="IPR021137">
    <property type="entry name" value="Ribosomal_bL35-like"/>
</dbReference>
<dbReference type="InterPro" id="IPR018265">
    <property type="entry name" value="Ribosomal_bL35_CS"/>
</dbReference>
<dbReference type="InterPro" id="IPR037229">
    <property type="entry name" value="Ribosomal_bL35_sf"/>
</dbReference>
<dbReference type="NCBIfam" id="TIGR00001">
    <property type="entry name" value="rpmI_bact"/>
    <property type="match status" value="1"/>
</dbReference>
<dbReference type="PANTHER" id="PTHR33343">
    <property type="entry name" value="54S RIBOSOMAL PROTEIN BL35M"/>
    <property type="match status" value="1"/>
</dbReference>
<dbReference type="PANTHER" id="PTHR33343:SF1">
    <property type="entry name" value="LARGE RIBOSOMAL SUBUNIT PROTEIN BL35M"/>
    <property type="match status" value="1"/>
</dbReference>
<dbReference type="Pfam" id="PF01632">
    <property type="entry name" value="Ribosomal_L35p"/>
    <property type="match status" value="1"/>
</dbReference>
<dbReference type="PRINTS" id="PR00064">
    <property type="entry name" value="RIBOSOMALL35"/>
</dbReference>
<dbReference type="SUPFAM" id="SSF143034">
    <property type="entry name" value="L35p-like"/>
    <property type="match status" value="1"/>
</dbReference>
<dbReference type="PROSITE" id="PS00936">
    <property type="entry name" value="RIBOSOMAL_L35"/>
    <property type="match status" value="1"/>
</dbReference>
<proteinExistence type="inferred from homology"/>
<evidence type="ECO:0000255" key="1">
    <source>
        <dbReference type="HAMAP-Rule" id="MF_00514"/>
    </source>
</evidence>
<evidence type="ECO:0000305" key="2"/>
<sequence length="65" mass="7253">MPKIKTVRGAAKRFKKTAGGGFKRKHANLRHILTKKSTKRKRHLRPKGMVSKGDLGLVIACLPYA</sequence>
<accession>Q6D4H0</accession>
<organism>
    <name type="scientific">Pectobacterium atrosepticum (strain SCRI 1043 / ATCC BAA-672)</name>
    <name type="common">Erwinia carotovora subsp. atroseptica</name>
    <dbReference type="NCBI Taxonomy" id="218491"/>
    <lineage>
        <taxon>Bacteria</taxon>
        <taxon>Pseudomonadati</taxon>
        <taxon>Pseudomonadota</taxon>
        <taxon>Gammaproteobacteria</taxon>
        <taxon>Enterobacterales</taxon>
        <taxon>Pectobacteriaceae</taxon>
        <taxon>Pectobacterium</taxon>
    </lineage>
</organism>
<protein>
    <recommendedName>
        <fullName evidence="1">Large ribosomal subunit protein bL35</fullName>
    </recommendedName>
    <alternativeName>
        <fullName evidence="2">50S ribosomal protein L35</fullName>
    </alternativeName>
</protein>
<gene>
    <name evidence="1" type="primary">rpmI</name>
    <name type="ordered locus">ECA2420</name>
</gene>
<keyword id="KW-1185">Reference proteome</keyword>
<keyword id="KW-0687">Ribonucleoprotein</keyword>
<keyword id="KW-0689">Ribosomal protein</keyword>
<feature type="chain" id="PRO_0000258677" description="Large ribosomal subunit protein bL35">
    <location>
        <begin position="1"/>
        <end position="65"/>
    </location>
</feature>
<reference key="1">
    <citation type="journal article" date="2004" name="Proc. Natl. Acad. Sci. U.S.A.">
        <title>Genome sequence of the enterobacterial phytopathogen Erwinia carotovora subsp. atroseptica and characterization of virulence factors.</title>
        <authorList>
            <person name="Bell K.S."/>
            <person name="Sebaihia M."/>
            <person name="Pritchard L."/>
            <person name="Holden M.T.G."/>
            <person name="Hyman L.J."/>
            <person name="Holeva M.C."/>
            <person name="Thomson N.R."/>
            <person name="Bentley S.D."/>
            <person name="Churcher L.J.C."/>
            <person name="Mungall K."/>
            <person name="Atkin R."/>
            <person name="Bason N."/>
            <person name="Brooks K."/>
            <person name="Chillingworth T."/>
            <person name="Clark K."/>
            <person name="Doggett J."/>
            <person name="Fraser A."/>
            <person name="Hance Z."/>
            <person name="Hauser H."/>
            <person name="Jagels K."/>
            <person name="Moule S."/>
            <person name="Norbertczak H."/>
            <person name="Ormond D."/>
            <person name="Price C."/>
            <person name="Quail M.A."/>
            <person name="Sanders M."/>
            <person name="Walker D."/>
            <person name="Whitehead S."/>
            <person name="Salmond G.P.C."/>
            <person name="Birch P.R.J."/>
            <person name="Parkhill J."/>
            <person name="Toth I.K."/>
        </authorList>
    </citation>
    <scope>NUCLEOTIDE SEQUENCE [LARGE SCALE GENOMIC DNA]</scope>
    <source>
        <strain>SCRI 1043 / ATCC BAA-672</strain>
    </source>
</reference>